<feature type="chain" id="PRO_0000268821" description="Uncharacterized protein C4orf36 homolog">
    <location>
        <begin position="1"/>
        <end position="117"/>
    </location>
</feature>
<protein>
    <recommendedName>
        <fullName>Uncharacterized protein C4orf36 homolog</fullName>
    </recommendedName>
</protein>
<proteinExistence type="predicted"/>
<dbReference type="EMBL" id="AK006033">
    <property type="protein sequence ID" value="BAB24374.1"/>
    <property type="molecule type" value="mRNA"/>
</dbReference>
<dbReference type="CCDS" id="CCDS51575.1"/>
<dbReference type="RefSeq" id="NP_001157022.1">
    <property type="nucleotide sequence ID" value="NM_001163550.1"/>
</dbReference>
<dbReference type="RefSeq" id="NP_083100.1">
    <property type="nucleotide sequence ID" value="NM_028824.1"/>
</dbReference>
<dbReference type="RefSeq" id="XP_006535321.1">
    <property type="nucleotide sequence ID" value="XM_006535258.1"/>
</dbReference>
<dbReference type="RefSeq" id="XP_006535323.1">
    <property type="nucleotide sequence ID" value="XM_006535260.1"/>
</dbReference>
<dbReference type="RefSeq" id="XP_006535324.1">
    <property type="nucleotide sequence ID" value="XM_006535261.4"/>
</dbReference>
<dbReference type="RefSeq" id="XP_011247882.1">
    <property type="nucleotide sequence ID" value="XM_011249580.1"/>
</dbReference>
<dbReference type="RefSeq" id="XP_011247883.1">
    <property type="nucleotide sequence ID" value="XM_011249581.1"/>
</dbReference>
<dbReference type="RefSeq" id="XP_011247884.1">
    <property type="nucleotide sequence ID" value="XM_011249582.2"/>
</dbReference>
<dbReference type="RefSeq" id="XP_017176610.1">
    <property type="nucleotide sequence ID" value="XM_017321121.1"/>
</dbReference>
<dbReference type="STRING" id="10090.ENSMUSP00000113935"/>
<dbReference type="PhosphoSitePlus" id="Q9DAA3"/>
<dbReference type="PaxDb" id="10090-ENSMUSP00000114503"/>
<dbReference type="Ensembl" id="ENSMUST00000119824.8">
    <property type="protein sequence ID" value="ENSMUSP00000113935.2"/>
    <property type="gene ID" value="ENSMUSG00000029320.12"/>
</dbReference>
<dbReference type="Ensembl" id="ENSMUST00000120108.8">
    <property type="protein sequence ID" value="ENSMUSP00000113969.2"/>
    <property type="gene ID" value="ENSMUSG00000029320.12"/>
</dbReference>
<dbReference type="Ensembl" id="ENSMUST00000120688.6">
    <property type="protein sequence ID" value="ENSMUSP00000113469.2"/>
    <property type="gene ID" value="ENSMUSG00000029320.12"/>
</dbReference>
<dbReference type="Ensembl" id="ENSMUST00000134926.8">
    <property type="protein sequence ID" value="ENSMUSP00000114503.2"/>
    <property type="gene ID" value="ENSMUSG00000029320.12"/>
</dbReference>
<dbReference type="GeneID" id="74218"/>
<dbReference type="KEGG" id="mmu:74218"/>
<dbReference type="UCSC" id="uc008yjr.1">
    <property type="organism name" value="mouse"/>
</dbReference>
<dbReference type="AGR" id="MGI:1921468"/>
<dbReference type="MGI" id="MGI:1921468">
    <property type="gene designation" value="1700016H13Rik"/>
</dbReference>
<dbReference type="VEuPathDB" id="HostDB:ENSMUSG00000029320"/>
<dbReference type="eggNOG" id="ENOG502SVGH">
    <property type="taxonomic scope" value="Eukaryota"/>
</dbReference>
<dbReference type="GeneTree" id="ENSGT00390000015549"/>
<dbReference type="HOGENOM" id="CLU_140433_0_0_1"/>
<dbReference type="InParanoid" id="Q9DAA3"/>
<dbReference type="OMA" id="YEVQEPW"/>
<dbReference type="OrthoDB" id="9821984at2759"/>
<dbReference type="PhylomeDB" id="Q9DAA3"/>
<dbReference type="TreeFam" id="TF336886"/>
<dbReference type="BioGRID-ORCS" id="74218">
    <property type="hits" value="0 hits in 77 CRISPR screens"/>
</dbReference>
<dbReference type="PRO" id="PR:Q9DAA3"/>
<dbReference type="Proteomes" id="UP000000589">
    <property type="component" value="Chromosome 5"/>
</dbReference>
<dbReference type="RNAct" id="Q9DAA3">
    <property type="molecule type" value="protein"/>
</dbReference>
<dbReference type="Bgee" id="ENSMUSG00000029320">
    <property type="expression patterns" value="Expressed in seminiferous tubule of testis and 20 other cell types or tissues"/>
</dbReference>
<dbReference type="ExpressionAtlas" id="Q9DAA3">
    <property type="expression patterns" value="baseline and differential"/>
</dbReference>
<dbReference type="InterPro" id="IPR027825">
    <property type="entry name" value="DUF4522"/>
</dbReference>
<dbReference type="PANTHER" id="PTHR38002">
    <property type="entry name" value="C4ORF36 ISOFORM 11"/>
    <property type="match status" value="1"/>
</dbReference>
<dbReference type="PANTHER" id="PTHR38002:SF1">
    <property type="entry name" value="CHROMOSOME 4 OPEN READING FRAME 36"/>
    <property type="match status" value="1"/>
</dbReference>
<dbReference type="Pfam" id="PF15022">
    <property type="entry name" value="DUF4522"/>
    <property type="match status" value="1"/>
</dbReference>
<keyword id="KW-1185">Reference proteome</keyword>
<reference key="1">
    <citation type="journal article" date="2005" name="Science">
        <title>The transcriptional landscape of the mammalian genome.</title>
        <authorList>
            <person name="Carninci P."/>
            <person name="Kasukawa T."/>
            <person name="Katayama S."/>
            <person name="Gough J."/>
            <person name="Frith M.C."/>
            <person name="Maeda N."/>
            <person name="Oyama R."/>
            <person name="Ravasi T."/>
            <person name="Lenhard B."/>
            <person name="Wells C."/>
            <person name="Kodzius R."/>
            <person name="Shimokawa K."/>
            <person name="Bajic V.B."/>
            <person name="Brenner S.E."/>
            <person name="Batalov S."/>
            <person name="Forrest A.R."/>
            <person name="Zavolan M."/>
            <person name="Davis M.J."/>
            <person name="Wilming L.G."/>
            <person name="Aidinis V."/>
            <person name="Allen J.E."/>
            <person name="Ambesi-Impiombato A."/>
            <person name="Apweiler R."/>
            <person name="Aturaliya R.N."/>
            <person name="Bailey T.L."/>
            <person name="Bansal M."/>
            <person name="Baxter L."/>
            <person name="Beisel K.W."/>
            <person name="Bersano T."/>
            <person name="Bono H."/>
            <person name="Chalk A.M."/>
            <person name="Chiu K.P."/>
            <person name="Choudhary V."/>
            <person name="Christoffels A."/>
            <person name="Clutterbuck D.R."/>
            <person name="Crowe M.L."/>
            <person name="Dalla E."/>
            <person name="Dalrymple B.P."/>
            <person name="de Bono B."/>
            <person name="Della Gatta G."/>
            <person name="di Bernardo D."/>
            <person name="Down T."/>
            <person name="Engstrom P."/>
            <person name="Fagiolini M."/>
            <person name="Faulkner G."/>
            <person name="Fletcher C.F."/>
            <person name="Fukushima T."/>
            <person name="Furuno M."/>
            <person name="Futaki S."/>
            <person name="Gariboldi M."/>
            <person name="Georgii-Hemming P."/>
            <person name="Gingeras T.R."/>
            <person name="Gojobori T."/>
            <person name="Green R.E."/>
            <person name="Gustincich S."/>
            <person name="Harbers M."/>
            <person name="Hayashi Y."/>
            <person name="Hensch T.K."/>
            <person name="Hirokawa N."/>
            <person name="Hill D."/>
            <person name="Huminiecki L."/>
            <person name="Iacono M."/>
            <person name="Ikeo K."/>
            <person name="Iwama A."/>
            <person name="Ishikawa T."/>
            <person name="Jakt M."/>
            <person name="Kanapin A."/>
            <person name="Katoh M."/>
            <person name="Kawasawa Y."/>
            <person name="Kelso J."/>
            <person name="Kitamura H."/>
            <person name="Kitano H."/>
            <person name="Kollias G."/>
            <person name="Krishnan S.P."/>
            <person name="Kruger A."/>
            <person name="Kummerfeld S.K."/>
            <person name="Kurochkin I.V."/>
            <person name="Lareau L.F."/>
            <person name="Lazarevic D."/>
            <person name="Lipovich L."/>
            <person name="Liu J."/>
            <person name="Liuni S."/>
            <person name="McWilliam S."/>
            <person name="Madan Babu M."/>
            <person name="Madera M."/>
            <person name="Marchionni L."/>
            <person name="Matsuda H."/>
            <person name="Matsuzawa S."/>
            <person name="Miki H."/>
            <person name="Mignone F."/>
            <person name="Miyake S."/>
            <person name="Morris K."/>
            <person name="Mottagui-Tabar S."/>
            <person name="Mulder N."/>
            <person name="Nakano N."/>
            <person name="Nakauchi H."/>
            <person name="Ng P."/>
            <person name="Nilsson R."/>
            <person name="Nishiguchi S."/>
            <person name="Nishikawa S."/>
            <person name="Nori F."/>
            <person name="Ohara O."/>
            <person name="Okazaki Y."/>
            <person name="Orlando V."/>
            <person name="Pang K.C."/>
            <person name="Pavan W.J."/>
            <person name="Pavesi G."/>
            <person name="Pesole G."/>
            <person name="Petrovsky N."/>
            <person name="Piazza S."/>
            <person name="Reed J."/>
            <person name="Reid J.F."/>
            <person name="Ring B.Z."/>
            <person name="Ringwald M."/>
            <person name="Rost B."/>
            <person name="Ruan Y."/>
            <person name="Salzberg S.L."/>
            <person name="Sandelin A."/>
            <person name="Schneider C."/>
            <person name="Schoenbach C."/>
            <person name="Sekiguchi K."/>
            <person name="Semple C.A."/>
            <person name="Seno S."/>
            <person name="Sessa L."/>
            <person name="Sheng Y."/>
            <person name="Shibata Y."/>
            <person name="Shimada H."/>
            <person name="Shimada K."/>
            <person name="Silva D."/>
            <person name="Sinclair B."/>
            <person name="Sperling S."/>
            <person name="Stupka E."/>
            <person name="Sugiura K."/>
            <person name="Sultana R."/>
            <person name="Takenaka Y."/>
            <person name="Taki K."/>
            <person name="Tammoja K."/>
            <person name="Tan S.L."/>
            <person name="Tang S."/>
            <person name="Taylor M.S."/>
            <person name="Tegner J."/>
            <person name="Teichmann S.A."/>
            <person name="Ueda H.R."/>
            <person name="van Nimwegen E."/>
            <person name="Verardo R."/>
            <person name="Wei C.L."/>
            <person name="Yagi K."/>
            <person name="Yamanishi H."/>
            <person name="Zabarovsky E."/>
            <person name="Zhu S."/>
            <person name="Zimmer A."/>
            <person name="Hide W."/>
            <person name="Bult C."/>
            <person name="Grimmond S.M."/>
            <person name="Teasdale R.D."/>
            <person name="Liu E.T."/>
            <person name="Brusic V."/>
            <person name="Quackenbush J."/>
            <person name="Wahlestedt C."/>
            <person name="Mattick J.S."/>
            <person name="Hume D.A."/>
            <person name="Kai C."/>
            <person name="Sasaki D."/>
            <person name="Tomaru Y."/>
            <person name="Fukuda S."/>
            <person name="Kanamori-Katayama M."/>
            <person name="Suzuki M."/>
            <person name="Aoki J."/>
            <person name="Arakawa T."/>
            <person name="Iida J."/>
            <person name="Imamura K."/>
            <person name="Itoh M."/>
            <person name="Kato T."/>
            <person name="Kawaji H."/>
            <person name="Kawagashira N."/>
            <person name="Kawashima T."/>
            <person name="Kojima M."/>
            <person name="Kondo S."/>
            <person name="Konno H."/>
            <person name="Nakano K."/>
            <person name="Ninomiya N."/>
            <person name="Nishio T."/>
            <person name="Okada M."/>
            <person name="Plessy C."/>
            <person name="Shibata K."/>
            <person name="Shiraki T."/>
            <person name="Suzuki S."/>
            <person name="Tagami M."/>
            <person name="Waki K."/>
            <person name="Watahiki A."/>
            <person name="Okamura-Oho Y."/>
            <person name="Suzuki H."/>
            <person name="Kawai J."/>
            <person name="Hayashizaki Y."/>
        </authorList>
    </citation>
    <scope>NUCLEOTIDE SEQUENCE [LARGE SCALE MRNA]</scope>
    <source>
        <strain>C57BL/6J</strain>
        <tissue>Testis</tissue>
    </source>
</reference>
<name>CD036_MOUSE</name>
<sequence>MAYGLPRRNTVQTILKGSCYKVQEPWDLAELTKTWYTNLTNIRLPFLGEIVFGSPMNLLASQTKQECQFPSMQSMALEKEYEAKRLTKLKCQENVCKEIQASLREKKVGLRRPLQPK</sequence>
<accession>Q9DAA3</accession>
<organism>
    <name type="scientific">Mus musculus</name>
    <name type="common">Mouse</name>
    <dbReference type="NCBI Taxonomy" id="10090"/>
    <lineage>
        <taxon>Eukaryota</taxon>
        <taxon>Metazoa</taxon>
        <taxon>Chordata</taxon>
        <taxon>Craniata</taxon>
        <taxon>Vertebrata</taxon>
        <taxon>Euteleostomi</taxon>
        <taxon>Mammalia</taxon>
        <taxon>Eutheria</taxon>
        <taxon>Euarchontoglires</taxon>
        <taxon>Glires</taxon>
        <taxon>Rodentia</taxon>
        <taxon>Myomorpha</taxon>
        <taxon>Muroidea</taxon>
        <taxon>Muridae</taxon>
        <taxon>Murinae</taxon>
        <taxon>Mus</taxon>
        <taxon>Mus</taxon>
    </lineage>
</organism>